<organism>
    <name type="scientific">Neurospora crassa (strain ATCC 24698 / 74-OR23-1A / CBS 708.71 / DSM 1257 / FGSC 987)</name>
    <dbReference type="NCBI Taxonomy" id="367110"/>
    <lineage>
        <taxon>Eukaryota</taxon>
        <taxon>Fungi</taxon>
        <taxon>Dikarya</taxon>
        <taxon>Ascomycota</taxon>
        <taxon>Pezizomycotina</taxon>
        <taxon>Sordariomycetes</taxon>
        <taxon>Sordariomycetidae</taxon>
        <taxon>Sordariales</taxon>
        <taxon>Sordariaceae</taxon>
        <taxon>Neurospora</taxon>
    </lineage>
</organism>
<reference key="1">
    <citation type="journal article" date="2003" name="Nature">
        <title>The genome sequence of the filamentous fungus Neurospora crassa.</title>
        <authorList>
            <person name="Galagan J.E."/>
            <person name="Calvo S.E."/>
            <person name="Borkovich K.A."/>
            <person name="Selker E.U."/>
            <person name="Read N.D."/>
            <person name="Jaffe D.B."/>
            <person name="FitzHugh W."/>
            <person name="Ma L.-J."/>
            <person name="Smirnov S."/>
            <person name="Purcell S."/>
            <person name="Rehman B."/>
            <person name="Elkins T."/>
            <person name="Engels R."/>
            <person name="Wang S."/>
            <person name="Nielsen C.B."/>
            <person name="Butler J."/>
            <person name="Endrizzi M."/>
            <person name="Qui D."/>
            <person name="Ianakiev P."/>
            <person name="Bell-Pedersen D."/>
            <person name="Nelson M.A."/>
            <person name="Werner-Washburne M."/>
            <person name="Selitrennikoff C.P."/>
            <person name="Kinsey J.A."/>
            <person name="Braun E.L."/>
            <person name="Zelter A."/>
            <person name="Schulte U."/>
            <person name="Kothe G.O."/>
            <person name="Jedd G."/>
            <person name="Mewes H.-W."/>
            <person name="Staben C."/>
            <person name="Marcotte E."/>
            <person name="Greenberg D."/>
            <person name="Roy A."/>
            <person name="Foley K."/>
            <person name="Naylor J."/>
            <person name="Stange-Thomann N."/>
            <person name="Barrett R."/>
            <person name="Gnerre S."/>
            <person name="Kamal M."/>
            <person name="Kamvysselis M."/>
            <person name="Mauceli E.W."/>
            <person name="Bielke C."/>
            <person name="Rudd S."/>
            <person name="Frishman D."/>
            <person name="Krystofova S."/>
            <person name="Rasmussen C."/>
            <person name="Metzenberg R.L."/>
            <person name="Perkins D.D."/>
            <person name="Kroken S."/>
            <person name="Cogoni C."/>
            <person name="Macino G."/>
            <person name="Catcheside D.E.A."/>
            <person name="Li W."/>
            <person name="Pratt R.J."/>
            <person name="Osmani S.A."/>
            <person name="DeSouza C.P.C."/>
            <person name="Glass N.L."/>
            <person name="Orbach M.J."/>
            <person name="Berglund J.A."/>
            <person name="Voelker R."/>
            <person name="Yarden O."/>
            <person name="Plamann M."/>
            <person name="Seiler S."/>
            <person name="Dunlap J.C."/>
            <person name="Radford A."/>
            <person name="Aramayo R."/>
            <person name="Natvig D.O."/>
            <person name="Alex L.A."/>
            <person name="Mannhaupt G."/>
            <person name="Ebbole D.J."/>
            <person name="Freitag M."/>
            <person name="Paulsen I."/>
            <person name="Sachs M.S."/>
            <person name="Lander E.S."/>
            <person name="Nusbaum C."/>
            <person name="Birren B.W."/>
        </authorList>
    </citation>
    <scope>NUCLEOTIDE SEQUENCE [LARGE SCALE GENOMIC DNA]</scope>
    <source>
        <strain>ATCC 24698 / 74-OR23-1A / CBS 708.71 / DSM 1257 / FGSC 987</strain>
    </source>
</reference>
<reference key="2">
    <citation type="journal article" date="2011" name="Protein Expr. Purif.">
        <title>Expression and characterization of the Neurospora crassa endoglucanase GH5-1.</title>
        <authorList>
            <person name="Sun J."/>
            <person name="Phillips C.M."/>
            <person name="Anderson C.T."/>
            <person name="Beeson W.T."/>
            <person name="Marletta M.A."/>
            <person name="Glass N.L."/>
        </authorList>
    </citation>
    <scope>FUNCTION</scope>
    <scope>CATALYTIC ACTIVITY</scope>
    <scope>SUBCELLULAR LOCATION</scope>
    <scope>GLYCOSYLATION</scope>
</reference>
<name>GUN3_NEUCR</name>
<keyword id="KW-0325">Glycoprotein</keyword>
<keyword id="KW-0326">Glycosidase</keyword>
<keyword id="KW-0378">Hydrolase</keyword>
<keyword id="KW-1185">Reference proteome</keyword>
<keyword id="KW-0964">Secreted</keyword>
<keyword id="KW-0732">Signal</keyword>
<sequence>MKATILASTFAAGALAQSGAWGQCGGNGWSGATSCISGYACNYVNDWYSQCQPGTAAPTTTAAATTLVTSTKTAPPASTTTATASGKFKWFGVNEAGGEFGDGIFPGRWGTEFTFPDTNTIQTLRSQGYNIFRVGFAMERLVPNTLTSSFDNGYLTNLTQVVNSVTNSGAYIVLDPHNYGRYYGKIITDTDAFKTFWQNVAAKFASNSKVIFDTNNEYNTMDQTLVLNLNQAAIDGIRAAGATSQYIFVEGNQWTGAWSWNVTNTNLAALTDPENKIVYEMHQYLDSDSSGTSTACVSSEIGVQRIVGATAWLRANGKKGVLGEFAGGANSVCKAAVTGLLEHLKANTDVWEGALWWAAGPWWGDYMYSFEPPSGTGYTYYNSLLKTYTP</sequence>
<gene>
    <name evidence="5" type="primary">gh5-1</name>
    <name type="ORF">NCU00762</name>
</gene>
<proteinExistence type="evidence at protein level"/>
<dbReference type="EC" id="3.2.1.4" evidence="4"/>
<dbReference type="EMBL" id="CM002236">
    <property type="protein sequence ID" value="EAA34923.1"/>
    <property type="molecule type" value="Genomic_DNA"/>
</dbReference>
<dbReference type="RefSeq" id="XP_964159.1">
    <property type="nucleotide sequence ID" value="XM_959066.2"/>
</dbReference>
<dbReference type="SMR" id="Q7SDR1"/>
<dbReference type="STRING" id="367110.Q7SDR1"/>
<dbReference type="CAZy" id="CBM1">
    <property type="family name" value="Carbohydrate-Binding Module Family 1"/>
</dbReference>
<dbReference type="CAZy" id="GH5">
    <property type="family name" value="Glycoside Hydrolase Family 5"/>
</dbReference>
<dbReference type="GlyCosmos" id="Q7SDR1">
    <property type="glycosylation" value="2 sites, No reported glycans"/>
</dbReference>
<dbReference type="PaxDb" id="5141-EFNCRP00000000813"/>
<dbReference type="EnsemblFungi" id="EAA34923">
    <property type="protein sequence ID" value="EAA34923"/>
    <property type="gene ID" value="NCU00762"/>
</dbReference>
<dbReference type="GeneID" id="3880299"/>
<dbReference type="KEGG" id="ncr:NCU00762"/>
<dbReference type="VEuPathDB" id="FungiDB:NCU00762"/>
<dbReference type="HOGENOM" id="CLU_029718_0_1_1"/>
<dbReference type="InParanoid" id="Q7SDR1"/>
<dbReference type="OrthoDB" id="5823761at2759"/>
<dbReference type="Proteomes" id="UP000001805">
    <property type="component" value="Chromosome 1, Linkage Group I"/>
</dbReference>
<dbReference type="GO" id="GO:0005576">
    <property type="term" value="C:extracellular region"/>
    <property type="evidence" value="ECO:0007669"/>
    <property type="project" value="UniProtKB-SubCell"/>
</dbReference>
<dbReference type="GO" id="GO:0008810">
    <property type="term" value="F:cellulase activity"/>
    <property type="evidence" value="ECO:0007669"/>
    <property type="project" value="UniProtKB-EC"/>
</dbReference>
<dbReference type="GO" id="GO:0030248">
    <property type="term" value="F:cellulose binding"/>
    <property type="evidence" value="ECO:0007669"/>
    <property type="project" value="InterPro"/>
</dbReference>
<dbReference type="GO" id="GO:0009251">
    <property type="term" value="P:glucan catabolic process"/>
    <property type="evidence" value="ECO:0000318"/>
    <property type="project" value="GO_Central"/>
</dbReference>
<dbReference type="FunFam" id="3.20.20.80:FF:000078">
    <property type="entry name" value="Endo-beta-1,4-glucanase B"/>
    <property type="match status" value="1"/>
</dbReference>
<dbReference type="Gene3D" id="3.20.20.80">
    <property type="entry name" value="Glycosidases"/>
    <property type="match status" value="1"/>
</dbReference>
<dbReference type="InterPro" id="IPR035971">
    <property type="entry name" value="CBD_sf"/>
</dbReference>
<dbReference type="InterPro" id="IPR000254">
    <property type="entry name" value="Cellulose-bd_dom_fun"/>
</dbReference>
<dbReference type="InterPro" id="IPR001547">
    <property type="entry name" value="Glyco_hydro_5"/>
</dbReference>
<dbReference type="InterPro" id="IPR017853">
    <property type="entry name" value="Glycoside_hydrolase_SF"/>
</dbReference>
<dbReference type="PANTHER" id="PTHR34142">
    <property type="entry name" value="ENDO-BETA-1,4-GLUCANASE A"/>
    <property type="match status" value="1"/>
</dbReference>
<dbReference type="PANTHER" id="PTHR34142:SF1">
    <property type="entry name" value="GLYCOSIDE HYDROLASE FAMILY 5 DOMAIN-CONTAINING PROTEIN"/>
    <property type="match status" value="1"/>
</dbReference>
<dbReference type="Pfam" id="PF00734">
    <property type="entry name" value="CBM_1"/>
    <property type="match status" value="1"/>
</dbReference>
<dbReference type="Pfam" id="PF00150">
    <property type="entry name" value="Cellulase"/>
    <property type="match status" value="1"/>
</dbReference>
<dbReference type="SMART" id="SM00236">
    <property type="entry name" value="fCBD"/>
    <property type="match status" value="1"/>
</dbReference>
<dbReference type="SUPFAM" id="SSF51445">
    <property type="entry name" value="(Trans)glycosidases"/>
    <property type="match status" value="1"/>
</dbReference>
<dbReference type="SUPFAM" id="SSF57180">
    <property type="entry name" value="Cellulose-binding domain"/>
    <property type="match status" value="1"/>
</dbReference>
<dbReference type="PROSITE" id="PS00562">
    <property type="entry name" value="CBM1_1"/>
    <property type="match status" value="1"/>
</dbReference>
<dbReference type="PROSITE" id="PS51164">
    <property type="entry name" value="CBM1_2"/>
    <property type="match status" value="1"/>
</dbReference>
<accession>Q7SDR1</accession>
<evidence type="ECO:0000255" key="1"/>
<evidence type="ECO:0000255" key="2">
    <source>
        <dbReference type="PROSITE-ProRule" id="PRU00498"/>
    </source>
</evidence>
<evidence type="ECO:0000255" key="3">
    <source>
        <dbReference type="PROSITE-ProRule" id="PRU00597"/>
    </source>
</evidence>
<evidence type="ECO:0000269" key="4">
    <source>
    </source>
</evidence>
<evidence type="ECO:0000303" key="5">
    <source>
    </source>
</evidence>
<evidence type="ECO:0000305" key="6"/>
<feature type="signal peptide" evidence="1">
    <location>
        <begin position="1"/>
        <end position="16"/>
    </location>
</feature>
<feature type="chain" id="PRO_0000432747" description="Endoglucanase gh5-1" evidence="1">
    <location>
        <begin position="17"/>
        <end position="390"/>
    </location>
</feature>
<feature type="domain" description="CBM1" evidence="3">
    <location>
        <begin position="17"/>
        <end position="52"/>
    </location>
</feature>
<feature type="glycosylation site" description="N-linked (GlcNAc...) asparagine" evidence="2">
    <location>
        <position position="157"/>
    </location>
</feature>
<feature type="glycosylation site" description="N-linked (GlcNAc...) asparagine" evidence="2">
    <location>
        <position position="261"/>
    </location>
</feature>
<comment type="function">
    <text evidence="4">Endoglucanase that plays an important role in biomass degradation. Binds onto plant cell walls to participate in the hydrolysis of cellulose.</text>
</comment>
<comment type="catalytic activity">
    <reaction evidence="4">
        <text>Endohydrolysis of (1-&gt;4)-beta-D-glucosidic linkages in cellulose, lichenin and cereal beta-D-glucans.</text>
        <dbReference type="EC" id="3.2.1.4"/>
    </reaction>
</comment>
<comment type="subcellular location">
    <subcellularLocation>
        <location evidence="4">Secreted</location>
    </subcellularLocation>
</comment>
<comment type="PTM">
    <text evidence="4">N-glycosylated.</text>
</comment>
<comment type="miscellaneous">
    <text evidence="6">The biological conversion of cellulose to glucose generally requires three types of hydrolytic enzymes: (1) Endoglucanases which cut internal beta-1,4-glucosidic bonds; (2) Exocellobiohydrolases that cut the disaccharide cellobiose from the non-reducing end of the cellulose polymer chain; (3) Beta-1,4-glucosidases which hydrolyze the cellobiose and other short cello-oligosaccharides to glucose.</text>
</comment>
<comment type="similarity">
    <text evidence="6">Belongs to the glycosyl hydrolase 5 (cellulase A) family.</text>
</comment>
<protein>
    <recommendedName>
        <fullName evidence="5">Endoglucanase gh5-1</fullName>
        <ecNumber evidence="4">3.2.1.4</ecNumber>
    </recommendedName>
    <alternativeName>
        <fullName evidence="6">Cellulase gh5-1</fullName>
    </alternativeName>
    <alternativeName>
        <fullName evidence="6">Endo-1,4-beta-glucanase gh5-1</fullName>
    </alternativeName>
</protein>